<accession>Q5UR98</accession>
<dbReference type="EMBL" id="AY653733">
    <property type="protein sequence ID" value="AAV50837.1"/>
    <property type="molecule type" value="Genomic_DNA"/>
</dbReference>
<dbReference type="KEGG" id="vg:9925209"/>
<dbReference type="Proteomes" id="UP000001134">
    <property type="component" value="Genome"/>
</dbReference>
<reference key="1">
    <citation type="journal article" date="2004" name="Science">
        <title>The 1.2-megabase genome sequence of Mimivirus.</title>
        <authorList>
            <person name="Raoult D."/>
            <person name="Audic S."/>
            <person name="Robert C."/>
            <person name="Abergel C."/>
            <person name="Renesto P."/>
            <person name="Ogata H."/>
            <person name="La Scola B."/>
            <person name="Susan M."/>
            <person name="Claverie J.-M."/>
        </authorList>
    </citation>
    <scope>NUCLEOTIDE SEQUENCE [LARGE SCALE GENOMIC DNA]</scope>
    <source>
        <strain>Rowbotham-Bradford</strain>
    </source>
</reference>
<protein>
    <recommendedName>
        <fullName>Uncharacterized protein L574</fullName>
    </recommendedName>
</protein>
<organismHost>
    <name type="scientific">Acanthamoeba polyphaga</name>
    <name type="common">Amoeba</name>
    <dbReference type="NCBI Taxonomy" id="5757"/>
</organismHost>
<gene>
    <name type="ordered locus">MIMI_L574</name>
</gene>
<sequence length="281" mass="33208">MDPYIINKIQYDNDKITTPLRIFDKFIKRDKDDNIKYFEIHSNFINDLLGGKFVKDIEISVSDTHYNKLVDNNYLYGAEITDFNKLQIKGTLENGVITFPQINSDNPLPKISNKQYIYIRVKITGELEDIMNLRLKTTCRVGYIDKEIFDYVMNSEFRYLDNCVLSEGIISNCDDEINFSENSSYEVLLSQAHSMFPFSMFFYFISKTICYTNIECHVIDYDFNIVDDTRDLIYENKHVTLNMQELSNESIKKPIESSYHNKIFYQGIYSQRLVYLRFTTI</sequence>
<organism>
    <name type="scientific">Acanthamoeba polyphaga mimivirus</name>
    <name type="common">APMV</name>
    <dbReference type="NCBI Taxonomy" id="212035"/>
    <lineage>
        <taxon>Viruses</taxon>
        <taxon>Varidnaviria</taxon>
        <taxon>Bamfordvirae</taxon>
        <taxon>Nucleocytoviricota</taxon>
        <taxon>Megaviricetes</taxon>
        <taxon>Imitervirales</taxon>
        <taxon>Mimiviridae</taxon>
        <taxon>Megamimivirinae</taxon>
        <taxon>Mimivirus</taxon>
        <taxon>Mimivirus bradfordmassiliense</taxon>
    </lineage>
</organism>
<keyword id="KW-1185">Reference proteome</keyword>
<feature type="chain" id="PRO_0000253282" description="Uncharacterized protein L574">
    <location>
        <begin position="1"/>
        <end position="281"/>
    </location>
</feature>
<proteinExistence type="predicted"/>
<name>YL574_MIMIV</name>